<sequence>MHCPFCFAVDTKVIDSRLVGEGSSVRRRRQCLVCNERFTTFEVAELVMPRVIKSNDVREPFNEDKLRSGMLRALEKRPVSADDVEMALNHIKSQLRATGEREVPSKMIGNLVMEQLKKLDKVAYIRFASVYRSFEDIKDFGEEIARLQD</sequence>
<name>NRDR_SALTY</name>
<reference key="1">
    <citation type="journal article" date="2001" name="Nature">
        <title>Complete genome sequence of Salmonella enterica serovar Typhimurium LT2.</title>
        <authorList>
            <person name="McClelland M."/>
            <person name="Sanderson K.E."/>
            <person name="Spieth J."/>
            <person name="Clifton S.W."/>
            <person name="Latreille P."/>
            <person name="Courtney L."/>
            <person name="Porwollik S."/>
            <person name="Ali J."/>
            <person name="Dante M."/>
            <person name="Du F."/>
            <person name="Hou S."/>
            <person name="Layman D."/>
            <person name="Leonard S."/>
            <person name="Nguyen C."/>
            <person name="Scott K."/>
            <person name="Holmes A."/>
            <person name="Grewal N."/>
            <person name="Mulvaney E."/>
            <person name="Ryan E."/>
            <person name="Sun H."/>
            <person name="Florea L."/>
            <person name="Miller W."/>
            <person name="Stoneking T."/>
            <person name="Nhan M."/>
            <person name="Waterston R."/>
            <person name="Wilson R.K."/>
        </authorList>
    </citation>
    <scope>NUCLEOTIDE SEQUENCE [LARGE SCALE GENOMIC DNA]</scope>
    <source>
        <strain>LT2 / SGSC1412 / ATCC 700720</strain>
    </source>
</reference>
<accession>P0A2M1</accession>
<accession>Q8ZRD5</accession>
<evidence type="ECO:0000255" key="1">
    <source>
        <dbReference type="HAMAP-Rule" id="MF_00440"/>
    </source>
</evidence>
<organism>
    <name type="scientific">Salmonella typhimurium (strain LT2 / SGSC1412 / ATCC 700720)</name>
    <dbReference type="NCBI Taxonomy" id="99287"/>
    <lineage>
        <taxon>Bacteria</taxon>
        <taxon>Pseudomonadati</taxon>
        <taxon>Pseudomonadota</taxon>
        <taxon>Gammaproteobacteria</taxon>
        <taxon>Enterobacterales</taxon>
        <taxon>Enterobacteriaceae</taxon>
        <taxon>Salmonella</taxon>
    </lineage>
</organism>
<keyword id="KW-0067">ATP-binding</keyword>
<keyword id="KW-0238">DNA-binding</keyword>
<keyword id="KW-0479">Metal-binding</keyword>
<keyword id="KW-0547">Nucleotide-binding</keyword>
<keyword id="KW-1185">Reference proteome</keyword>
<keyword id="KW-0678">Repressor</keyword>
<keyword id="KW-0804">Transcription</keyword>
<keyword id="KW-0805">Transcription regulation</keyword>
<keyword id="KW-0862">Zinc</keyword>
<keyword id="KW-0863">Zinc-finger</keyword>
<proteinExistence type="inferred from homology"/>
<protein>
    <recommendedName>
        <fullName evidence="1">Transcriptional repressor NrdR</fullName>
    </recommendedName>
</protein>
<feature type="chain" id="PRO_0000182343" description="Transcriptional repressor NrdR">
    <location>
        <begin position="1"/>
        <end position="149"/>
    </location>
</feature>
<feature type="domain" description="ATP-cone" evidence="1">
    <location>
        <begin position="49"/>
        <end position="139"/>
    </location>
</feature>
<feature type="zinc finger region" evidence="1">
    <location>
        <begin position="3"/>
        <end position="34"/>
    </location>
</feature>
<dbReference type="EMBL" id="AE006468">
    <property type="protein sequence ID" value="AAL19369.1"/>
    <property type="molecule type" value="Genomic_DNA"/>
</dbReference>
<dbReference type="RefSeq" id="WP_000543533.1">
    <property type="nucleotide sequence ID" value="NC_003197.2"/>
</dbReference>
<dbReference type="SMR" id="P0A2M1"/>
<dbReference type="STRING" id="99287.STM0415"/>
<dbReference type="PaxDb" id="99287-STM0415"/>
<dbReference type="DNASU" id="1251934"/>
<dbReference type="GeneID" id="66754886"/>
<dbReference type="KEGG" id="stm:STM0415"/>
<dbReference type="PATRIC" id="fig|99287.12.peg.444"/>
<dbReference type="HOGENOM" id="CLU_108412_0_0_6"/>
<dbReference type="OMA" id="YRFTTYE"/>
<dbReference type="PhylomeDB" id="P0A2M1"/>
<dbReference type="BioCyc" id="SENT99287:STM0415-MONOMER"/>
<dbReference type="Proteomes" id="UP000001014">
    <property type="component" value="Chromosome"/>
</dbReference>
<dbReference type="GO" id="GO:0005524">
    <property type="term" value="F:ATP binding"/>
    <property type="evidence" value="ECO:0007669"/>
    <property type="project" value="UniProtKB-KW"/>
</dbReference>
<dbReference type="GO" id="GO:0003690">
    <property type="term" value="F:double-stranded DNA binding"/>
    <property type="evidence" value="ECO:0000318"/>
    <property type="project" value="GO_Central"/>
</dbReference>
<dbReference type="GO" id="GO:0008270">
    <property type="term" value="F:zinc ion binding"/>
    <property type="evidence" value="ECO:0007669"/>
    <property type="project" value="UniProtKB-UniRule"/>
</dbReference>
<dbReference type="GO" id="GO:0045892">
    <property type="term" value="P:negative regulation of DNA-templated transcription"/>
    <property type="evidence" value="ECO:0000318"/>
    <property type="project" value="GO_Central"/>
</dbReference>
<dbReference type="HAMAP" id="MF_00440">
    <property type="entry name" value="NrdR"/>
    <property type="match status" value="1"/>
</dbReference>
<dbReference type="InterPro" id="IPR005144">
    <property type="entry name" value="ATP-cone_dom"/>
</dbReference>
<dbReference type="InterPro" id="IPR055173">
    <property type="entry name" value="NrdR-like_N"/>
</dbReference>
<dbReference type="InterPro" id="IPR003796">
    <property type="entry name" value="RNR_NrdR-like"/>
</dbReference>
<dbReference type="NCBIfam" id="TIGR00244">
    <property type="entry name" value="transcriptional regulator NrdR"/>
    <property type="match status" value="1"/>
</dbReference>
<dbReference type="PANTHER" id="PTHR30455">
    <property type="entry name" value="TRANSCRIPTIONAL REPRESSOR NRDR"/>
    <property type="match status" value="1"/>
</dbReference>
<dbReference type="PANTHER" id="PTHR30455:SF2">
    <property type="entry name" value="TRANSCRIPTIONAL REPRESSOR NRDR"/>
    <property type="match status" value="1"/>
</dbReference>
<dbReference type="Pfam" id="PF03477">
    <property type="entry name" value="ATP-cone"/>
    <property type="match status" value="1"/>
</dbReference>
<dbReference type="Pfam" id="PF22811">
    <property type="entry name" value="Zn_ribbon_NrdR"/>
    <property type="match status" value="1"/>
</dbReference>
<dbReference type="PROSITE" id="PS51161">
    <property type="entry name" value="ATP_CONE"/>
    <property type="match status" value="1"/>
</dbReference>
<comment type="function">
    <text evidence="1">Negatively regulates transcription of bacterial ribonucleotide reductase nrd genes and operons by binding to NrdR-boxes.</text>
</comment>
<comment type="cofactor">
    <cofactor evidence="1">
        <name>Zn(2+)</name>
        <dbReference type="ChEBI" id="CHEBI:29105"/>
    </cofactor>
    <text evidence="1">Binds 1 zinc ion.</text>
</comment>
<comment type="similarity">
    <text evidence="1">Belongs to the NrdR family.</text>
</comment>
<gene>
    <name evidence="1" type="primary">nrdR</name>
    <name type="ordered locus">STM0415</name>
</gene>